<proteinExistence type="inferred from homology"/>
<feature type="chain" id="PRO_0000263972" description="Argininosuccinate synthase">
    <location>
        <begin position="1"/>
        <end position="407"/>
    </location>
</feature>
<feature type="binding site" evidence="1">
    <location>
        <begin position="16"/>
        <end position="24"/>
    </location>
    <ligand>
        <name>ATP</name>
        <dbReference type="ChEBI" id="CHEBI:30616"/>
    </ligand>
</feature>
<feature type="binding site" evidence="1">
    <location>
        <position position="44"/>
    </location>
    <ligand>
        <name>ATP</name>
        <dbReference type="ChEBI" id="CHEBI:30616"/>
    </ligand>
</feature>
<feature type="binding site" evidence="1">
    <location>
        <position position="96"/>
    </location>
    <ligand>
        <name>L-citrulline</name>
        <dbReference type="ChEBI" id="CHEBI:57743"/>
    </ligand>
</feature>
<feature type="binding site" evidence="1">
    <location>
        <position position="101"/>
    </location>
    <ligand>
        <name>L-citrulline</name>
        <dbReference type="ChEBI" id="CHEBI:57743"/>
    </ligand>
</feature>
<feature type="binding site" evidence="1">
    <location>
        <position position="126"/>
    </location>
    <ligand>
        <name>ATP</name>
        <dbReference type="ChEBI" id="CHEBI:30616"/>
    </ligand>
</feature>
<feature type="binding site" evidence="1">
    <location>
        <position position="128"/>
    </location>
    <ligand>
        <name>L-aspartate</name>
        <dbReference type="ChEBI" id="CHEBI:29991"/>
    </ligand>
</feature>
<feature type="binding site" evidence="1">
    <location>
        <position position="132"/>
    </location>
    <ligand>
        <name>L-aspartate</name>
        <dbReference type="ChEBI" id="CHEBI:29991"/>
    </ligand>
</feature>
<feature type="binding site" evidence="1">
    <location>
        <position position="132"/>
    </location>
    <ligand>
        <name>L-citrulline</name>
        <dbReference type="ChEBI" id="CHEBI:57743"/>
    </ligand>
</feature>
<feature type="binding site" evidence="1">
    <location>
        <position position="133"/>
    </location>
    <ligand>
        <name>L-aspartate</name>
        <dbReference type="ChEBI" id="CHEBI:29991"/>
    </ligand>
</feature>
<feature type="binding site" evidence="1">
    <location>
        <position position="136"/>
    </location>
    <ligand>
        <name>L-citrulline</name>
        <dbReference type="ChEBI" id="CHEBI:57743"/>
    </ligand>
</feature>
<feature type="binding site" evidence="1">
    <location>
        <position position="185"/>
    </location>
    <ligand>
        <name>L-citrulline</name>
        <dbReference type="ChEBI" id="CHEBI:57743"/>
    </ligand>
</feature>
<feature type="binding site" evidence="1">
    <location>
        <position position="194"/>
    </location>
    <ligand>
        <name>L-citrulline</name>
        <dbReference type="ChEBI" id="CHEBI:57743"/>
    </ligand>
</feature>
<feature type="binding site" evidence="1">
    <location>
        <position position="270"/>
    </location>
    <ligand>
        <name>L-citrulline</name>
        <dbReference type="ChEBI" id="CHEBI:57743"/>
    </ligand>
</feature>
<feature type="binding site" evidence="1">
    <location>
        <position position="282"/>
    </location>
    <ligand>
        <name>L-citrulline</name>
        <dbReference type="ChEBI" id="CHEBI:57743"/>
    </ligand>
</feature>
<accession>Q0I061</accession>
<comment type="catalytic activity">
    <reaction evidence="1">
        <text>L-citrulline + L-aspartate + ATP = 2-(N(omega)-L-arginino)succinate + AMP + diphosphate + H(+)</text>
        <dbReference type="Rhea" id="RHEA:10932"/>
        <dbReference type="ChEBI" id="CHEBI:15378"/>
        <dbReference type="ChEBI" id="CHEBI:29991"/>
        <dbReference type="ChEBI" id="CHEBI:30616"/>
        <dbReference type="ChEBI" id="CHEBI:33019"/>
        <dbReference type="ChEBI" id="CHEBI:57472"/>
        <dbReference type="ChEBI" id="CHEBI:57743"/>
        <dbReference type="ChEBI" id="CHEBI:456215"/>
        <dbReference type="EC" id="6.3.4.5"/>
    </reaction>
</comment>
<comment type="pathway">
    <text evidence="1">Amino-acid biosynthesis; L-arginine biosynthesis; L-arginine from L-ornithine and carbamoyl phosphate: step 2/3.</text>
</comment>
<comment type="subunit">
    <text evidence="1">Homotetramer.</text>
</comment>
<comment type="subcellular location">
    <subcellularLocation>
        <location evidence="1">Cytoplasm</location>
    </subcellularLocation>
</comment>
<comment type="similarity">
    <text evidence="1">Belongs to the argininosuccinate synthase family. Type 1 subfamily.</text>
</comment>
<organism>
    <name type="scientific">Shewanella sp. (strain MR-7)</name>
    <dbReference type="NCBI Taxonomy" id="60481"/>
    <lineage>
        <taxon>Bacteria</taxon>
        <taxon>Pseudomonadati</taxon>
        <taxon>Pseudomonadota</taxon>
        <taxon>Gammaproteobacteria</taxon>
        <taxon>Alteromonadales</taxon>
        <taxon>Shewanellaceae</taxon>
        <taxon>Shewanella</taxon>
    </lineage>
</organism>
<protein>
    <recommendedName>
        <fullName evidence="1">Argininosuccinate synthase</fullName>
        <ecNumber evidence="1">6.3.4.5</ecNumber>
    </recommendedName>
    <alternativeName>
        <fullName evidence="1">Citrulline--aspartate ligase</fullName>
    </alternativeName>
</protein>
<sequence length="407" mass="44522">MSIENKNTGVKKVVLAYSGGLDTSAIIPWLKETYDNCEIIAFCADVGQGEEELVGLTEKALASGASECHIVDLKEEFVKDYIYPTMATGAIYEGTYLLGTSMARPIIAKAQVEVARKVGADALCHGCTGKGNDQVRFEGCFAALAPDLKVIAPWREWTMQSREDLLAYLAERNIKTSASATKIYSRDANAFHISHEGGELEDPWNEPSKGVWTLTADPEDAPNQAEYVSLEVEHGRVTKVNGEALTPYAALMKLNAIAAPHGVGRIDITENRLVGMKSRGCYETPGGTVMFAALRAIEELVLDKTSRTWREQVGAQMAHLVYDGRWFTPLCKSLLAASESLAESVNGEVVVKLYKGHAIAVKKRSPNSLYSEAFATFGEDQVYDQKHAEGFIRLYSLASRIRALNAK</sequence>
<keyword id="KW-0028">Amino-acid biosynthesis</keyword>
<keyword id="KW-0055">Arginine biosynthesis</keyword>
<keyword id="KW-0067">ATP-binding</keyword>
<keyword id="KW-0963">Cytoplasm</keyword>
<keyword id="KW-0436">Ligase</keyword>
<keyword id="KW-0547">Nucleotide-binding</keyword>
<dbReference type="EC" id="6.3.4.5" evidence="1"/>
<dbReference type="EMBL" id="CP000444">
    <property type="protein sequence ID" value="ABI41244.1"/>
    <property type="molecule type" value="Genomic_DNA"/>
</dbReference>
<dbReference type="SMR" id="Q0I061"/>
<dbReference type="KEGG" id="shm:Shewmr7_0239"/>
<dbReference type="HOGENOM" id="CLU_032784_4_2_6"/>
<dbReference type="UniPathway" id="UPA00068">
    <property type="reaction ID" value="UER00113"/>
</dbReference>
<dbReference type="GO" id="GO:0005737">
    <property type="term" value="C:cytoplasm"/>
    <property type="evidence" value="ECO:0007669"/>
    <property type="project" value="UniProtKB-SubCell"/>
</dbReference>
<dbReference type="GO" id="GO:0004055">
    <property type="term" value="F:argininosuccinate synthase activity"/>
    <property type="evidence" value="ECO:0007669"/>
    <property type="project" value="UniProtKB-UniRule"/>
</dbReference>
<dbReference type="GO" id="GO:0005524">
    <property type="term" value="F:ATP binding"/>
    <property type="evidence" value="ECO:0007669"/>
    <property type="project" value="UniProtKB-UniRule"/>
</dbReference>
<dbReference type="GO" id="GO:0000053">
    <property type="term" value="P:argininosuccinate metabolic process"/>
    <property type="evidence" value="ECO:0007669"/>
    <property type="project" value="TreeGrafter"/>
</dbReference>
<dbReference type="GO" id="GO:0006526">
    <property type="term" value="P:L-arginine biosynthetic process"/>
    <property type="evidence" value="ECO:0007669"/>
    <property type="project" value="UniProtKB-UniRule"/>
</dbReference>
<dbReference type="GO" id="GO:0000050">
    <property type="term" value="P:urea cycle"/>
    <property type="evidence" value="ECO:0007669"/>
    <property type="project" value="TreeGrafter"/>
</dbReference>
<dbReference type="CDD" id="cd01999">
    <property type="entry name" value="ASS"/>
    <property type="match status" value="1"/>
</dbReference>
<dbReference type="FunFam" id="1.20.5.470:FF:000005">
    <property type="entry name" value="Argininosuccinate synthase"/>
    <property type="match status" value="1"/>
</dbReference>
<dbReference type="FunFam" id="3.40.50.620:FF:000019">
    <property type="entry name" value="Argininosuccinate synthase"/>
    <property type="match status" value="1"/>
</dbReference>
<dbReference type="FunFam" id="3.90.1260.10:FF:000007">
    <property type="entry name" value="Argininosuccinate synthase"/>
    <property type="match status" value="1"/>
</dbReference>
<dbReference type="Gene3D" id="3.90.1260.10">
    <property type="entry name" value="Argininosuccinate synthetase, chain A, domain 2"/>
    <property type="match status" value="1"/>
</dbReference>
<dbReference type="Gene3D" id="3.40.50.620">
    <property type="entry name" value="HUPs"/>
    <property type="match status" value="1"/>
</dbReference>
<dbReference type="Gene3D" id="1.20.5.470">
    <property type="entry name" value="Single helix bin"/>
    <property type="match status" value="1"/>
</dbReference>
<dbReference type="HAMAP" id="MF_00005">
    <property type="entry name" value="Arg_succ_synth_type1"/>
    <property type="match status" value="1"/>
</dbReference>
<dbReference type="InterPro" id="IPR048268">
    <property type="entry name" value="Arginosuc_syn_C"/>
</dbReference>
<dbReference type="InterPro" id="IPR048267">
    <property type="entry name" value="Arginosuc_syn_N"/>
</dbReference>
<dbReference type="InterPro" id="IPR001518">
    <property type="entry name" value="Arginosuc_synth"/>
</dbReference>
<dbReference type="InterPro" id="IPR018223">
    <property type="entry name" value="Arginosuc_synth_CS"/>
</dbReference>
<dbReference type="InterPro" id="IPR023434">
    <property type="entry name" value="Arginosuc_synth_type_1_subfam"/>
</dbReference>
<dbReference type="InterPro" id="IPR024074">
    <property type="entry name" value="AS_cat/multimer_dom_body"/>
</dbReference>
<dbReference type="InterPro" id="IPR014729">
    <property type="entry name" value="Rossmann-like_a/b/a_fold"/>
</dbReference>
<dbReference type="NCBIfam" id="TIGR00032">
    <property type="entry name" value="argG"/>
    <property type="match status" value="1"/>
</dbReference>
<dbReference type="NCBIfam" id="NF001770">
    <property type="entry name" value="PRK00509.1"/>
    <property type="match status" value="1"/>
</dbReference>
<dbReference type="PANTHER" id="PTHR11587">
    <property type="entry name" value="ARGININOSUCCINATE SYNTHASE"/>
    <property type="match status" value="1"/>
</dbReference>
<dbReference type="PANTHER" id="PTHR11587:SF2">
    <property type="entry name" value="ARGININOSUCCINATE SYNTHASE"/>
    <property type="match status" value="1"/>
</dbReference>
<dbReference type="Pfam" id="PF20979">
    <property type="entry name" value="Arginosuc_syn_C"/>
    <property type="match status" value="1"/>
</dbReference>
<dbReference type="Pfam" id="PF00764">
    <property type="entry name" value="Arginosuc_synth"/>
    <property type="match status" value="1"/>
</dbReference>
<dbReference type="SUPFAM" id="SSF52402">
    <property type="entry name" value="Adenine nucleotide alpha hydrolases-like"/>
    <property type="match status" value="1"/>
</dbReference>
<dbReference type="SUPFAM" id="SSF69864">
    <property type="entry name" value="Argininosuccinate synthetase, C-terminal domain"/>
    <property type="match status" value="1"/>
</dbReference>
<dbReference type="PROSITE" id="PS00564">
    <property type="entry name" value="ARGININOSUCCIN_SYN_1"/>
    <property type="match status" value="1"/>
</dbReference>
<dbReference type="PROSITE" id="PS00565">
    <property type="entry name" value="ARGININOSUCCIN_SYN_2"/>
    <property type="match status" value="1"/>
</dbReference>
<name>ASSY_SHESR</name>
<reference key="1">
    <citation type="submission" date="2006-08" db="EMBL/GenBank/DDBJ databases">
        <title>Complete sequence of chromosome 1 of Shewanella sp. MR-7.</title>
        <authorList>
            <person name="Copeland A."/>
            <person name="Lucas S."/>
            <person name="Lapidus A."/>
            <person name="Barry K."/>
            <person name="Detter J.C."/>
            <person name="Glavina del Rio T."/>
            <person name="Hammon N."/>
            <person name="Israni S."/>
            <person name="Dalin E."/>
            <person name="Tice H."/>
            <person name="Pitluck S."/>
            <person name="Kiss H."/>
            <person name="Brettin T."/>
            <person name="Bruce D."/>
            <person name="Han C."/>
            <person name="Tapia R."/>
            <person name="Gilna P."/>
            <person name="Schmutz J."/>
            <person name="Larimer F."/>
            <person name="Land M."/>
            <person name="Hauser L."/>
            <person name="Kyrpides N."/>
            <person name="Mikhailova N."/>
            <person name="Nealson K."/>
            <person name="Konstantinidis K."/>
            <person name="Klappenbach J."/>
            <person name="Tiedje J."/>
            <person name="Richardson P."/>
        </authorList>
    </citation>
    <scope>NUCLEOTIDE SEQUENCE [LARGE SCALE GENOMIC DNA]</scope>
    <source>
        <strain>MR-7</strain>
    </source>
</reference>
<gene>
    <name evidence="1" type="primary">argG</name>
    <name type="ordered locus">Shewmr7_0239</name>
</gene>
<evidence type="ECO:0000255" key="1">
    <source>
        <dbReference type="HAMAP-Rule" id="MF_00005"/>
    </source>
</evidence>